<keyword id="KW-0963">Cytoplasm</keyword>
<keyword id="KW-0274">FAD</keyword>
<keyword id="KW-0285">Flavoprotein</keyword>
<keyword id="KW-0489">Methyltransferase</keyword>
<keyword id="KW-0520">NAD</keyword>
<keyword id="KW-0521">NADP</keyword>
<keyword id="KW-1185">Reference proteome</keyword>
<keyword id="KW-0808">Transferase</keyword>
<keyword id="KW-0819">tRNA processing</keyword>
<protein>
    <recommendedName>
        <fullName evidence="1">Methylenetetrahydrofolate--tRNA-(uracil-5-)-methyltransferase TrmFO</fullName>
        <ecNumber evidence="1">2.1.1.74</ecNumber>
    </recommendedName>
    <alternativeName>
        <fullName evidence="1">Folate-dependent tRNA (uracil-5-)-methyltransferase</fullName>
    </alternativeName>
    <alternativeName>
        <fullName evidence="1">Folate-dependent tRNA(M-5-U54)-methyltransferase</fullName>
    </alternativeName>
</protein>
<gene>
    <name evidence="1" type="primary">trmFO</name>
    <name type="ordered locus">Daud_0601</name>
</gene>
<feature type="chain" id="PRO_0000346333" description="Methylenetetrahydrofolate--tRNA-(uracil-5-)-methyltransferase TrmFO">
    <location>
        <begin position="1"/>
        <end position="439"/>
    </location>
</feature>
<feature type="binding site" evidence="1">
    <location>
        <begin position="9"/>
        <end position="14"/>
    </location>
    <ligand>
        <name>FAD</name>
        <dbReference type="ChEBI" id="CHEBI:57692"/>
    </ligand>
</feature>
<sequence>MSGGVIVVGAGLAGAEASWQLVRRGVPVVLYEMRPRKCTPAHKTGDFAELVCSNSLRAEALTNAVGLLKEEMRRLGSLIMACADAHRVPAGGALAVDRQLFAAAVTERLTSHRLVTVCREEITTIPTAELVILATGPLTSDALADELRRLTGQEHLYFFDAVAPIVTLESIDQDRVFRSSRYGRGDPAYLNCPMSREEYERFWEALVAAERATRHTFERETHFEGCLPVEVIAARGRETLLYGPLKPVGLVDPRTGERPYAVVQLRQDNRAGTLYNLVGFQTNLKWGEQRRVFSMIPGLEQAEFVRYGVMHRNTYINAPVLLSPNLMLKSRPGLFIAGQLSGVEGYVESAAAGLVAGLNAARLYKGLEPLVFPPETAHGALINYIVTADPANFQPMNVNFGLFPPLPGKRVRRRPERNLAHAQRALERLAAWLTEKGEG</sequence>
<name>TRMFO_DESAP</name>
<dbReference type="EC" id="2.1.1.74" evidence="1"/>
<dbReference type="EMBL" id="CP000860">
    <property type="protein sequence ID" value="ACA59135.1"/>
    <property type="molecule type" value="Genomic_DNA"/>
</dbReference>
<dbReference type="RefSeq" id="WP_012301723.1">
    <property type="nucleotide sequence ID" value="NC_010424.1"/>
</dbReference>
<dbReference type="SMR" id="B1I258"/>
<dbReference type="STRING" id="477974.Daud_0601"/>
<dbReference type="KEGG" id="dau:Daud_0601"/>
<dbReference type="eggNOG" id="COG1206">
    <property type="taxonomic scope" value="Bacteria"/>
</dbReference>
<dbReference type="HOGENOM" id="CLU_033057_1_0_9"/>
<dbReference type="OrthoDB" id="9803114at2"/>
<dbReference type="Proteomes" id="UP000008544">
    <property type="component" value="Chromosome"/>
</dbReference>
<dbReference type="GO" id="GO:0005829">
    <property type="term" value="C:cytosol"/>
    <property type="evidence" value="ECO:0007669"/>
    <property type="project" value="TreeGrafter"/>
</dbReference>
<dbReference type="GO" id="GO:0050660">
    <property type="term" value="F:flavin adenine dinucleotide binding"/>
    <property type="evidence" value="ECO:0007669"/>
    <property type="project" value="UniProtKB-UniRule"/>
</dbReference>
<dbReference type="GO" id="GO:0047151">
    <property type="term" value="F:tRNA (uracil(54)-C5)-methyltransferase activity, 5,10-methylenetetrahydrofolate-dependent"/>
    <property type="evidence" value="ECO:0007669"/>
    <property type="project" value="UniProtKB-UniRule"/>
</dbReference>
<dbReference type="GO" id="GO:0030488">
    <property type="term" value="P:tRNA methylation"/>
    <property type="evidence" value="ECO:0007669"/>
    <property type="project" value="TreeGrafter"/>
</dbReference>
<dbReference type="GO" id="GO:0002098">
    <property type="term" value="P:tRNA wobble uridine modification"/>
    <property type="evidence" value="ECO:0007669"/>
    <property type="project" value="TreeGrafter"/>
</dbReference>
<dbReference type="Gene3D" id="3.50.50.60">
    <property type="entry name" value="FAD/NAD(P)-binding domain"/>
    <property type="match status" value="2"/>
</dbReference>
<dbReference type="HAMAP" id="MF_01037">
    <property type="entry name" value="TrmFO"/>
    <property type="match status" value="1"/>
</dbReference>
<dbReference type="InterPro" id="IPR036188">
    <property type="entry name" value="FAD/NAD-bd_sf"/>
</dbReference>
<dbReference type="InterPro" id="IPR002218">
    <property type="entry name" value="MnmG-rel"/>
</dbReference>
<dbReference type="InterPro" id="IPR040131">
    <property type="entry name" value="MnmG_N"/>
</dbReference>
<dbReference type="InterPro" id="IPR004417">
    <property type="entry name" value="TrmFO"/>
</dbReference>
<dbReference type="NCBIfam" id="TIGR00137">
    <property type="entry name" value="gid_trmFO"/>
    <property type="match status" value="1"/>
</dbReference>
<dbReference type="NCBIfam" id="NF003739">
    <property type="entry name" value="PRK05335.1"/>
    <property type="match status" value="1"/>
</dbReference>
<dbReference type="PANTHER" id="PTHR11806">
    <property type="entry name" value="GLUCOSE INHIBITED DIVISION PROTEIN A"/>
    <property type="match status" value="1"/>
</dbReference>
<dbReference type="PANTHER" id="PTHR11806:SF2">
    <property type="entry name" value="METHYLENETETRAHYDROFOLATE--TRNA-(URACIL-5-)-METHYLTRANSFERASE TRMFO"/>
    <property type="match status" value="1"/>
</dbReference>
<dbReference type="Pfam" id="PF01134">
    <property type="entry name" value="GIDA"/>
    <property type="match status" value="1"/>
</dbReference>
<dbReference type="SUPFAM" id="SSF51905">
    <property type="entry name" value="FAD/NAD(P)-binding domain"/>
    <property type="match status" value="1"/>
</dbReference>
<organism>
    <name type="scientific">Desulforudis audaxviator (strain MP104C)</name>
    <dbReference type="NCBI Taxonomy" id="477974"/>
    <lineage>
        <taxon>Bacteria</taxon>
        <taxon>Bacillati</taxon>
        <taxon>Bacillota</taxon>
        <taxon>Clostridia</taxon>
        <taxon>Thermoanaerobacterales</taxon>
        <taxon>Candidatus Desulforudaceae</taxon>
        <taxon>Candidatus Desulforudis</taxon>
    </lineage>
</organism>
<evidence type="ECO:0000255" key="1">
    <source>
        <dbReference type="HAMAP-Rule" id="MF_01037"/>
    </source>
</evidence>
<reference key="1">
    <citation type="submission" date="2007-10" db="EMBL/GenBank/DDBJ databases">
        <title>Complete sequence of chromosome of Desulforudis audaxviator MP104C.</title>
        <authorList>
            <person name="Copeland A."/>
            <person name="Lucas S."/>
            <person name="Lapidus A."/>
            <person name="Barry K."/>
            <person name="Glavina del Rio T."/>
            <person name="Dalin E."/>
            <person name="Tice H."/>
            <person name="Bruce D."/>
            <person name="Pitluck S."/>
            <person name="Lowry S.R."/>
            <person name="Larimer F."/>
            <person name="Land M.L."/>
            <person name="Hauser L."/>
            <person name="Kyrpides N."/>
            <person name="Ivanova N.N."/>
            <person name="Richardson P."/>
        </authorList>
    </citation>
    <scope>NUCLEOTIDE SEQUENCE [LARGE SCALE GENOMIC DNA]</scope>
    <source>
        <strain>MP104C</strain>
    </source>
</reference>
<accession>B1I258</accession>
<comment type="function">
    <text evidence="1">Catalyzes the folate-dependent formation of 5-methyl-uridine at position 54 (M-5-U54) in all tRNAs.</text>
</comment>
<comment type="catalytic activity">
    <reaction evidence="1">
        <text>uridine(54) in tRNA + (6R)-5,10-methylene-5,6,7,8-tetrahydrofolate + NADH + H(+) = 5-methyluridine(54) in tRNA + (6S)-5,6,7,8-tetrahydrofolate + NAD(+)</text>
        <dbReference type="Rhea" id="RHEA:16873"/>
        <dbReference type="Rhea" id="RHEA-COMP:10167"/>
        <dbReference type="Rhea" id="RHEA-COMP:10193"/>
        <dbReference type="ChEBI" id="CHEBI:15378"/>
        <dbReference type="ChEBI" id="CHEBI:15636"/>
        <dbReference type="ChEBI" id="CHEBI:57453"/>
        <dbReference type="ChEBI" id="CHEBI:57540"/>
        <dbReference type="ChEBI" id="CHEBI:57945"/>
        <dbReference type="ChEBI" id="CHEBI:65315"/>
        <dbReference type="ChEBI" id="CHEBI:74447"/>
        <dbReference type="EC" id="2.1.1.74"/>
    </reaction>
</comment>
<comment type="catalytic activity">
    <reaction evidence="1">
        <text>uridine(54) in tRNA + (6R)-5,10-methylene-5,6,7,8-tetrahydrofolate + NADPH + H(+) = 5-methyluridine(54) in tRNA + (6S)-5,6,7,8-tetrahydrofolate + NADP(+)</text>
        <dbReference type="Rhea" id="RHEA:62372"/>
        <dbReference type="Rhea" id="RHEA-COMP:10167"/>
        <dbReference type="Rhea" id="RHEA-COMP:10193"/>
        <dbReference type="ChEBI" id="CHEBI:15378"/>
        <dbReference type="ChEBI" id="CHEBI:15636"/>
        <dbReference type="ChEBI" id="CHEBI:57453"/>
        <dbReference type="ChEBI" id="CHEBI:57783"/>
        <dbReference type="ChEBI" id="CHEBI:58349"/>
        <dbReference type="ChEBI" id="CHEBI:65315"/>
        <dbReference type="ChEBI" id="CHEBI:74447"/>
        <dbReference type="EC" id="2.1.1.74"/>
    </reaction>
</comment>
<comment type="cofactor">
    <cofactor evidence="1">
        <name>FAD</name>
        <dbReference type="ChEBI" id="CHEBI:57692"/>
    </cofactor>
</comment>
<comment type="subcellular location">
    <subcellularLocation>
        <location evidence="1">Cytoplasm</location>
    </subcellularLocation>
</comment>
<comment type="similarity">
    <text evidence="1">Belongs to the MnmG family. TrmFO subfamily.</text>
</comment>
<proteinExistence type="inferred from homology"/>